<evidence type="ECO:0000250" key="1"/>
<evidence type="ECO:0000305" key="2"/>
<comment type="function">
    <text evidence="1">Redox-active protein probably involved in electron transport.</text>
</comment>
<comment type="cofactor">
    <cofactor evidence="1">
        <name>FMN</name>
        <dbReference type="ChEBI" id="CHEBI:58210"/>
    </cofactor>
    <text evidence="1">Binds 1 FMN per subunit.</text>
</comment>
<comment type="cofactor">
    <cofactor evidence="1">
        <name>[4Fe-4S] cluster</name>
        <dbReference type="ChEBI" id="CHEBI:49883"/>
    </cofactor>
    <text evidence="1">Binds 1 [4Fe-4S] cluster.</text>
</comment>
<comment type="subunit">
    <text>Homodimer.</text>
</comment>
<comment type="similarity">
    <text evidence="2">Belongs to the SsuE family. Isf subfamily.</text>
</comment>
<organism>
    <name type="scientific">Methanocaldococcus jannaschii (strain ATCC 43067 / DSM 2661 / JAL-1 / JCM 10045 / NBRC 100440)</name>
    <name type="common">Methanococcus jannaschii</name>
    <dbReference type="NCBI Taxonomy" id="243232"/>
    <lineage>
        <taxon>Archaea</taxon>
        <taxon>Methanobacteriati</taxon>
        <taxon>Methanobacteriota</taxon>
        <taxon>Methanomada group</taxon>
        <taxon>Methanococci</taxon>
        <taxon>Methanococcales</taxon>
        <taxon>Methanocaldococcaceae</taxon>
        <taxon>Methanocaldococcus</taxon>
    </lineage>
</organism>
<sequence>MKVFGISGSPRLQGTHFAVNYALNYLKEKGAEVRYFSVSRKKINFCLHCDYCIKKKEGCIHKDDMEEVYENLIWADGVIIGTPVYQGNVTGQLKTLMDRCRAILAKNPKVLRGRVGMAIAVGGDRNGGQEIALRTIHDFFIINEMIPVGGGSFGANLGATFWSKDRGKKGVEEDEEGLRVLRKTLNRFYEVLKEKRGL</sequence>
<protein>
    <recommendedName>
        <fullName>Iron-sulfur flavoprotein MJ0731</fullName>
        <shortName>Isf-1</shortName>
    </recommendedName>
    <alternativeName>
        <fullName>MCJ-1</fullName>
        <shortName>Mj1</shortName>
    </alternativeName>
</protein>
<name>ISF1_METJA</name>
<dbReference type="EMBL" id="L77117">
    <property type="protein sequence ID" value="AAB98727.1"/>
    <property type="molecule type" value="Genomic_DNA"/>
</dbReference>
<dbReference type="PIR" id="C64391">
    <property type="entry name" value="C64391"/>
</dbReference>
<dbReference type="RefSeq" id="WP_010870236.1">
    <property type="nucleotide sequence ID" value="NC_000909.1"/>
</dbReference>
<dbReference type="SMR" id="Q58141"/>
<dbReference type="FunCoup" id="Q58141">
    <property type="interactions" value="3"/>
</dbReference>
<dbReference type="STRING" id="243232.MJ_0731"/>
<dbReference type="PaxDb" id="243232-MJ_0731"/>
<dbReference type="EnsemblBacteria" id="AAB98727">
    <property type="protein sequence ID" value="AAB98727"/>
    <property type="gene ID" value="MJ_0731"/>
</dbReference>
<dbReference type="GeneID" id="1451608"/>
<dbReference type="KEGG" id="mja:MJ_0731"/>
<dbReference type="eggNOG" id="arCOG02573">
    <property type="taxonomic scope" value="Archaea"/>
</dbReference>
<dbReference type="HOGENOM" id="CLU_050993_3_0_2"/>
<dbReference type="InParanoid" id="Q58141"/>
<dbReference type="OrthoDB" id="9059at2157"/>
<dbReference type="PhylomeDB" id="Q58141"/>
<dbReference type="Proteomes" id="UP000000805">
    <property type="component" value="Chromosome"/>
</dbReference>
<dbReference type="GO" id="GO:0051539">
    <property type="term" value="F:4 iron, 4 sulfur cluster binding"/>
    <property type="evidence" value="ECO:0007669"/>
    <property type="project" value="UniProtKB-KW"/>
</dbReference>
<dbReference type="GO" id="GO:0046872">
    <property type="term" value="F:metal ion binding"/>
    <property type="evidence" value="ECO:0007669"/>
    <property type="project" value="UniProtKB-KW"/>
</dbReference>
<dbReference type="GO" id="GO:0016491">
    <property type="term" value="F:oxidoreductase activity"/>
    <property type="evidence" value="ECO:0007669"/>
    <property type="project" value="InterPro"/>
</dbReference>
<dbReference type="Gene3D" id="3.40.50.360">
    <property type="match status" value="1"/>
</dbReference>
<dbReference type="InterPro" id="IPR029039">
    <property type="entry name" value="Flavoprotein-like_sf"/>
</dbReference>
<dbReference type="InterPro" id="IPR005025">
    <property type="entry name" value="FMN_Rdtase-like_dom"/>
</dbReference>
<dbReference type="InterPro" id="IPR051796">
    <property type="entry name" value="ISF_SsuE-like"/>
</dbReference>
<dbReference type="PANTHER" id="PTHR43278:SF3">
    <property type="entry name" value="IRON-SULFUR FLAVOPROTEIN MJ0731"/>
    <property type="match status" value="1"/>
</dbReference>
<dbReference type="PANTHER" id="PTHR43278">
    <property type="entry name" value="NAD(P)H-DEPENDENT FMN-CONTAINING OXIDOREDUCTASE YWQN-RELATED"/>
    <property type="match status" value="1"/>
</dbReference>
<dbReference type="Pfam" id="PF03358">
    <property type="entry name" value="FMN_red"/>
    <property type="match status" value="1"/>
</dbReference>
<dbReference type="SUPFAM" id="SSF52218">
    <property type="entry name" value="Flavoproteins"/>
    <property type="match status" value="1"/>
</dbReference>
<keyword id="KW-0004">4Fe-4S</keyword>
<keyword id="KW-0285">Flavoprotein</keyword>
<keyword id="KW-0288">FMN</keyword>
<keyword id="KW-0408">Iron</keyword>
<keyword id="KW-0411">Iron-sulfur</keyword>
<keyword id="KW-0479">Metal-binding</keyword>
<keyword id="KW-1185">Reference proteome</keyword>
<accession>Q58141</accession>
<feature type="chain" id="PRO_0000160599" description="Iron-sulfur flavoprotein MJ0731">
    <location>
        <begin position="1"/>
        <end position="198"/>
    </location>
</feature>
<feature type="binding site" evidence="1">
    <location>
        <position position="46"/>
    </location>
    <ligand>
        <name>[4Fe-4S] cluster</name>
        <dbReference type="ChEBI" id="CHEBI:49883"/>
    </ligand>
</feature>
<feature type="binding site" evidence="1">
    <location>
        <position position="49"/>
    </location>
    <ligand>
        <name>[4Fe-4S] cluster</name>
        <dbReference type="ChEBI" id="CHEBI:49883"/>
    </ligand>
</feature>
<feature type="binding site" evidence="1">
    <location>
        <position position="52"/>
    </location>
    <ligand>
        <name>[4Fe-4S] cluster</name>
        <dbReference type="ChEBI" id="CHEBI:49883"/>
    </ligand>
</feature>
<feature type="binding site" evidence="1">
    <location>
        <position position="59"/>
    </location>
    <ligand>
        <name>[4Fe-4S] cluster</name>
        <dbReference type="ChEBI" id="CHEBI:49883"/>
    </ligand>
</feature>
<proteinExistence type="inferred from homology"/>
<gene>
    <name type="ordered locus">MJ0731</name>
</gene>
<reference key="1">
    <citation type="journal article" date="1996" name="Science">
        <title>Complete genome sequence of the methanogenic archaeon, Methanococcus jannaschii.</title>
        <authorList>
            <person name="Bult C.J."/>
            <person name="White O."/>
            <person name="Olsen G.J."/>
            <person name="Zhou L."/>
            <person name="Fleischmann R.D."/>
            <person name="Sutton G.G."/>
            <person name="Blake J.A."/>
            <person name="FitzGerald L.M."/>
            <person name="Clayton R.A."/>
            <person name="Gocayne J.D."/>
            <person name="Kerlavage A.R."/>
            <person name="Dougherty B.A."/>
            <person name="Tomb J.-F."/>
            <person name="Adams M.D."/>
            <person name="Reich C.I."/>
            <person name="Overbeek R."/>
            <person name="Kirkness E.F."/>
            <person name="Weinstock K.G."/>
            <person name="Merrick J.M."/>
            <person name="Glodek A."/>
            <person name="Scott J.L."/>
            <person name="Geoghagen N.S.M."/>
            <person name="Weidman J.F."/>
            <person name="Fuhrmann J.L."/>
            <person name="Nguyen D."/>
            <person name="Utterback T.R."/>
            <person name="Kelley J.M."/>
            <person name="Peterson J.D."/>
            <person name="Sadow P.W."/>
            <person name="Hanna M.C."/>
            <person name="Cotton M.D."/>
            <person name="Roberts K.M."/>
            <person name="Hurst M.A."/>
            <person name="Kaine B.P."/>
            <person name="Borodovsky M."/>
            <person name="Klenk H.-P."/>
            <person name="Fraser C.M."/>
            <person name="Smith H.O."/>
            <person name="Woese C.R."/>
            <person name="Venter J.C."/>
        </authorList>
    </citation>
    <scope>NUCLEOTIDE SEQUENCE [LARGE SCALE GENOMIC DNA]</scope>
    <source>
        <strain>ATCC 43067 / DSM 2661 / JAL-1 / JCM 10045 / NBRC 100440</strain>
    </source>
</reference>
<reference key="2">
    <citation type="journal article" date="2000" name="J. Bacteriol.">
        <title>Site-specific mutational analysis of a novel cysteine motif proposed to ligate the 4Fe-4S cluster in the iron-sulfur flavoprotein of the thermophilic methanoarchaeon Methanosarcina thermophila.</title>
        <authorList>
            <person name="Leartsakulpanich U."/>
            <person name="Antonkine M.L."/>
            <person name="Ferry J.G."/>
        </authorList>
    </citation>
    <scope>PROTEIN FAMILY</scope>
</reference>